<comment type="function">
    <text evidence="1">Catalyzes the reversible oxidative deamination of glutamate to alpha-ketoglutarate and ammonia.</text>
</comment>
<comment type="catalytic activity">
    <reaction>
        <text>L-glutamate + NADP(+) + H2O = 2-oxoglutarate + NH4(+) + NADPH + H(+)</text>
        <dbReference type="Rhea" id="RHEA:11612"/>
        <dbReference type="ChEBI" id="CHEBI:15377"/>
        <dbReference type="ChEBI" id="CHEBI:15378"/>
        <dbReference type="ChEBI" id="CHEBI:16810"/>
        <dbReference type="ChEBI" id="CHEBI:28938"/>
        <dbReference type="ChEBI" id="CHEBI:29985"/>
        <dbReference type="ChEBI" id="CHEBI:57783"/>
        <dbReference type="ChEBI" id="CHEBI:58349"/>
        <dbReference type="EC" id="1.4.1.4"/>
    </reaction>
</comment>
<comment type="subunit">
    <text evidence="1">Homohexamer.</text>
</comment>
<comment type="similarity">
    <text evidence="3">Belongs to the Glu/Leu/Phe/Val dehydrogenases family.</text>
</comment>
<comment type="sequence caution" evidence="3">
    <conflict type="erroneous initiation">
        <sequence resource="EMBL-CDS" id="BAC18792"/>
    </conflict>
    <text>Extended N-terminus.</text>
</comment>
<protein>
    <recommendedName>
        <fullName>NADP-specific glutamate dehydrogenase</fullName>
        <shortName>NADP-GDH</shortName>
        <ecNumber>1.4.1.4</ecNumber>
    </recommendedName>
</protein>
<name>DHE4_COREF</name>
<organism>
    <name type="scientific">Corynebacterium efficiens (strain DSM 44549 / YS-314 / AJ 12310 / JCM 11189 / NBRC 100395)</name>
    <dbReference type="NCBI Taxonomy" id="196164"/>
    <lineage>
        <taxon>Bacteria</taxon>
        <taxon>Bacillati</taxon>
        <taxon>Actinomycetota</taxon>
        <taxon>Actinomycetes</taxon>
        <taxon>Mycobacteriales</taxon>
        <taxon>Corynebacteriaceae</taxon>
        <taxon>Corynebacterium</taxon>
    </lineage>
</organism>
<reference key="1">
    <citation type="submission" date="2002-03" db="EMBL/GenBank/DDBJ databases">
        <title>Corynebacterium efficiens gdh gene encoding glutamate dehydrogenase NADP dependent.</title>
        <authorList>
            <person name="Matsuzaki Y."/>
            <person name="Kimura E."/>
            <person name="Nakamura K."/>
            <person name="Kawahara Y."/>
            <person name="Sugimoto S."/>
        </authorList>
    </citation>
    <scope>NUCLEOTIDE SEQUENCE [GENOMIC DNA]</scope>
    <source>
        <strain>DSM 44549 / YS-314 / AJ 12310 / JCM 11189 / NBRC 100395</strain>
    </source>
</reference>
<reference key="2">
    <citation type="journal article" date="2003" name="Genome Res.">
        <title>Comparative complete genome sequence analysis of the amino acid replacements responsible for the thermostability of Corynebacterium efficiens.</title>
        <authorList>
            <person name="Nishio Y."/>
            <person name="Nakamura Y."/>
            <person name="Kawarabayasi Y."/>
            <person name="Usuda Y."/>
            <person name="Kimura E."/>
            <person name="Sugimoto S."/>
            <person name="Matsui K."/>
            <person name="Yamagishi A."/>
            <person name="Kikuchi H."/>
            <person name="Ikeo K."/>
            <person name="Gojobori T."/>
        </authorList>
    </citation>
    <scope>NUCLEOTIDE SEQUENCE [LARGE SCALE GENOMIC DNA]</scope>
    <source>
        <strain>DSM 44549 / YS-314 / AJ 12310 / JCM 11189 / NBRC 100395</strain>
    </source>
</reference>
<feature type="chain" id="PRO_0000182767" description="NADP-specific glutamate dehydrogenase">
    <location>
        <begin position="1"/>
        <end position="447"/>
    </location>
</feature>
<feature type="active site" description="Proton donor" evidence="2">
    <location>
        <position position="128"/>
    </location>
</feature>
<feature type="binding site" evidence="1">
    <location>
        <position position="92"/>
    </location>
    <ligand>
        <name>substrate</name>
    </ligand>
</feature>
<feature type="binding site" evidence="1">
    <location>
        <position position="113"/>
    </location>
    <ligand>
        <name>substrate</name>
    </ligand>
</feature>
<feature type="binding site" evidence="1">
    <location>
        <position position="116"/>
    </location>
    <ligand>
        <name>substrate</name>
    </ligand>
</feature>
<feature type="binding site" evidence="1">
    <location>
        <position position="167"/>
    </location>
    <ligand>
        <name>substrate</name>
    </ligand>
</feature>
<feature type="binding site" evidence="1">
    <location>
        <position position="212"/>
    </location>
    <ligand>
        <name>NADP(+)</name>
        <dbReference type="ChEBI" id="CHEBI:58349"/>
    </ligand>
</feature>
<feature type="binding site" evidence="1">
    <location>
        <position position="243"/>
    </location>
    <ligand>
        <name>NADP(+)</name>
        <dbReference type="ChEBI" id="CHEBI:58349"/>
    </ligand>
</feature>
<feature type="binding site" evidence="1">
    <location>
        <position position="379"/>
    </location>
    <ligand>
        <name>substrate</name>
    </ligand>
</feature>
<feature type="site" description="Important for catalysis" evidence="1">
    <location>
        <position position="168"/>
    </location>
</feature>
<gene>
    <name type="primary">gdh</name>
    <name type="ordered locus">CE1982</name>
</gene>
<dbReference type="EC" id="1.4.1.4"/>
<dbReference type="EMBL" id="AB082375">
    <property type="protein sequence ID" value="BAB86838.1"/>
    <property type="molecule type" value="Genomic_DNA"/>
</dbReference>
<dbReference type="EMBL" id="BA000035">
    <property type="protein sequence ID" value="BAC18792.1"/>
    <property type="status" value="ALT_INIT"/>
    <property type="molecule type" value="Genomic_DNA"/>
</dbReference>
<dbReference type="RefSeq" id="WP_006767980.1">
    <property type="nucleotide sequence ID" value="NC_004369.1"/>
</dbReference>
<dbReference type="SMR" id="Q8RQP4"/>
<dbReference type="STRING" id="196164.gene:10742410"/>
<dbReference type="KEGG" id="cef:CE1982"/>
<dbReference type="eggNOG" id="COG0334">
    <property type="taxonomic scope" value="Bacteria"/>
</dbReference>
<dbReference type="HOGENOM" id="CLU_025763_2_1_11"/>
<dbReference type="OrthoDB" id="9803297at2"/>
<dbReference type="Proteomes" id="UP000001409">
    <property type="component" value="Chromosome"/>
</dbReference>
<dbReference type="GO" id="GO:0005737">
    <property type="term" value="C:cytoplasm"/>
    <property type="evidence" value="ECO:0000250"/>
    <property type="project" value="UniProtKB"/>
</dbReference>
<dbReference type="GO" id="GO:0005829">
    <property type="term" value="C:cytosol"/>
    <property type="evidence" value="ECO:0007669"/>
    <property type="project" value="TreeGrafter"/>
</dbReference>
<dbReference type="GO" id="GO:0004354">
    <property type="term" value="F:glutamate dehydrogenase (NADP+) activity"/>
    <property type="evidence" value="ECO:0000250"/>
    <property type="project" value="UniProtKB"/>
</dbReference>
<dbReference type="GO" id="GO:0006537">
    <property type="term" value="P:glutamate biosynthetic process"/>
    <property type="evidence" value="ECO:0000250"/>
    <property type="project" value="UniProtKB"/>
</dbReference>
<dbReference type="CDD" id="cd05313">
    <property type="entry name" value="NAD_bind_2_Glu_DH"/>
    <property type="match status" value="1"/>
</dbReference>
<dbReference type="FunFam" id="1.10.285.10:FF:000001">
    <property type="entry name" value="Glutamate dehydrogenase"/>
    <property type="match status" value="1"/>
</dbReference>
<dbReference type="FunFam" id="1.10.285.10:FF:000008">
    <property type="entry name" value="Glutamate dehydrogenase"/>
    <property type="match status" value="1"/>
</dbReference>
<dbReference type="FunFam" id="3.40.50.10860:FF:000002">
    <property type="entry name" value="Glutamate dehydrogenase"/>
    <property type="match status" value="1"/>
</dbReference>
<dbReference type="FunFam" id="3.40.50.720:FF:000030">
    <property type="entry name" value="Glutamate dehydrogenase"/>
    <property type="match status" value="1"/>
</dbReference>
<dbReference type="Gene3D" id="1.10.285.10">
    <property type="entry name" value="Glutamate Dehydrogenase, chain A, domain 3"/>
    <property type="match status" value="2"/>
</dbReference>
<dbReference type="Gene3D" id="3.40.50.10860">
    <property type="entry name" value="Leucine Dehydrogenase, chain A, domain 1"/>
    <property type="match status" value="1"/>
</dbReference>
<dbReference type="Gene3D" id="3.40.50.720">
    <property type="entry name" value="NAD(P)-binding Rossmann-like Domain"/>
    <property type="match status" value="1"/>
</dbReference>
<dbReference type="InterPro" id="IPR046346">
    <property type="entry name" value="Aminoacid_DH-like_N_sf"/>
</dbReference>
<dbReference type="InterPro" id="IPR006095">
    <property type="entry name" value="Glu/Leu/Phe/Val/Trp_DH"/>
</dbReference>
<dbReference type="InterPro" id="IPR006096">
    <property type="entry name" value="Glu/Leu/Phe/Val/Trp_DH_C"/>
</dbReference>
<dbReference type="InterPro" id="IPR006097">
    <property type="entry name" value="Glu/Leu/Phe/Val/Trp_DH_dimer"/>
</dbReference>
<dbReference type="InterPro" id="IPR033524">
    <property type="entry name" value="Glu/Leu/Phe/Val_DH_AS"/>
</dbReference>
<dbReference type="InterPro" id="IPR014362">
    <property type="entry name" value="Glu_DH"/>
</dbReference>
<dbReference type="InterPro" id="IPR050724">
    <property type="entry name" value="Glu_Leu_Phe_Val_DH"/>
</dbReference>
<dbReference type="InterPro" id="IPR036291">
    <property type="entry name" value="NAD(P)-bd_dom_sf"/>
</dbReference>
<dbReference type="InterPro" id="IPR033922">
    <property type="entry name" value="NAD_bind_Glu_DH"/>
</dbReference>
<dbReference type="NCBIfam" id="NF006929">
    <property type="entry name" value="PRK09414.1"/>
    <property type="match status" value="1"/>
</dbReference>
<dbReference type="PANTHER" id="PTHR43571">
    <property type="entry name" value="NADP-SPECIFIC GLUTAMATE DEHYDROGENASE 1-RELATED"/>
    <property type="match status" value="1"/>
</dbReference>
<dbReference type="PANTHER" id="PTHR43571:SF1">
    <property type="entry name" value="NADP-SPECIFIC GLUTAMATE DEHYDROGENASE 1-RELATED"/>
    <property type="match status" value="1"/>
</dbReference>
<dbReference type="Pfam" id="PF00208">
    <property type="entry name" value="ELFV_dehydrog"/>
    <property type="match status" value="1"/>
</dbReference>
<dbReference type="Pfam" id="PF02812">
    <property type="entry name" value="ELFV_dehydrog_N"/>
    <property type="match status" value="1"/>
</dbReference>
<dbReference type="PIRSF" id="PIRSF000185">
    <property type="entry name" value="Glu_DH"/>
    <property type="match status" value="1"/>
</dbReference>
<dbReference type="PRINTS" id="PR00082">
    <property type="entry name" value="GLFDHDRGNASE"/>
</dbReference>
<dbReference type="SMART" id="SM00839">
    <property type="entry name" value="ELFV_dehydrog"/>
    <property type="match status" value="1"/>
</dbReference>
<dbReference type="SUPFAM" id="SSF53223">
    <property type="entry name" value="Aminoacid dehydrogenase-like, N-terminal domain"/>
    <property type="match status" value="1"/>
</dbReference>
<dbReference type="SUPFAM" id="SSF51735">
    <property type="entry name" value="NAD(P)-binding Rossmann-fold domains"/>
    <property type="match status" value="1"/>
</dbReference>
<dbReference type="PROSITE" id="PS00074">
    <property type="entry name" value="GLFV_DEHYDROGENASE"/>
    <property type="match status" value="1"/>
</dbReference>
<accession>Q8RQP4</accession>
<sequence>MTVDEQVSNYYDMLLKRNAGEPEFHQAVAEVLESLKIVLEKDPHYADYGLIQRLCEPERQLIFRVPWVDDNGQVHVNRGFRVQFNSALGPYKGGLRFHPSVNLGIVKFLGFEQIFKNSLTGLPIGGGKGGSDFDPKGKSELEIMRFCQSFMTELHRHIGEYRDVPAGDIGVGGREIGYLFGHYRRLANQHESGVLTGKGLTWGGSLVRTEATGFGTVYFVQEMIKAEGETLEGKKVIVSGSGNVATYAIQKVQELGAVVVGFSDSSGWVSTPNGVDVAKLREIKEVRRARVSSYADEVEGAEYHTDGSIWDLTADIALPCATQNELDGDNARTLADNGCRFVAEGANMPSTPEAIDVFRERGVLFGPGKAANAGGVATSALEMQQNASRDSWSFEYTDERLHRIMKNIFKSCADTAKEYGHEKNYVVGANIAGFKKVADAMLAQGVI</sequence>
<keyword id="KW-0521">NADP</keyword>
<keyword id="KW-0560">Oxidoreductase</keyword>
<keyword id="KW-1185">Reference proteome</keyword>
<evidence type="ECO:0000250" key="1"/>
<evidence type="ECO:0000255" key="2">
    <source>
        <dbReference type="PROSITE-ProRule" id="PRU10011"/>
    </source>
</evidence>
<evidence type="ECO:0000305" key="3"/>
<proteinExistence type="inferred from homology"/>